<protein>
    <recommendedName>
        <fullName evidence="1">V-type ATP synthase beta chain</fullName>
    </recommendedName>
    <alternativeName>
        <fullName evidence="1">V-ATPase subunit B</fullName>
    </alternativeName>
</protein>
<reference key="1">
    <citation type="journal article" date="2001" name="Science">
        <title>Complete genome sequence of a virulent isolate of Streptococcus pneumoniae.</title>
        <authorList>
            <person name="Tettelin H."/>
            <person name="Nelson K.E."/>
            <person name="Paulsen I.T."/>
            <person name="Eisen J.A."/>
            <person name="Read T.D."/>
            <person name="Peterson S.N."/>
            <person name="Heidelberg J.F."/>
            <person name="DeBoy R.T."/>
            <person name="Haft D.H."/>
            <person name="Dodson R.J."/>
            <person name="Durkin A.S."/>
            <person name="Gwinn M.L."/>
            <person name="Kolonay J.F."/>
            <person name="Nelson W.C."/>
            <person name="Peterson J.D."/>
            <person name="Umayam L.A."/>
            <person name="White O."/>
            <person name="Salzberg S.L."/>
            <person name="Lewis M.R."/>
            <person name="Radune D."/>
            <person name="Holtzapple E.K."/>
            <person name="Khouri H.M."/>
            <person name="Wolf A.M."/>
            <person name="Utterback T.R."/>
            <person name="Hansen C.L."/>
            <person name="McDonald L.A."/>
            <person name="Feldblyum T.V."/>
            <person name="Angiuoli S.V."/>
            <person name="Dickinson T."/>
            <person name="Hickey E.K."/>
            <person name="Holt I.E."/>
            <person name="Loftus B.J."/>
            <person name="Yang F."/>
            <person name="Smith H.O."/>
            <person name="Venter J.C."/>
            <person name="Dougherty B.A."/>
            <person name="Morrison D.A."/>
            <person name="Hollingshead S.K."/>
            <person name="Fraser C.M."/>
        </authorList>
    </citation>
    <scope>NUCLEOTIDE SEQUENCE [LARGE SCALE GENOMIC DNA]</scope>
    <source>
        <strain>ATCC BAA-334 / TIGR4</strain>
    </source>
</reference>
<accession>Q97QA9</accession>
<name>VATB_STRPN</name>
<dbReference type="EMBL" id="AE005672">
    <property type="protein sequence ID" value="AAK75414.1"/>
    <property type="molecule type" value="Genomic_DNA"/>
</dbReference>
<dbReference type="PIR" id="E95152">
    <property type="entry name" value="E95152"/>
</dbReference>
<dbReference type="RefSeq" id="WP_000111248.1">
    <property type="nucleotide sequence ID" value="NZ_CP155539.1"/>
</dbReference>
<dbReference type="SMR" id="Q97QA9"/>
<dbReference type="PaxDb" id="170187-SP_1316"/>
<dbReference type="EnsemblBacteria" id="AAK75414">
    <property type="protein sequence ID" value="AAK75414"/>
    <property type="gene ID" value="SP_1316"/>
</dbReference>
<dbReference type="KEGG" id="spn:SP_1316"/>
<dbReference type="eggNOG" id="COG1156">
    <property type="taxonomic scope" value="Bacteria"/>
</dbReference>
<dbReference type="PhylomeDB" id="Q97QA9"/>
<dbReference type="BioCyc" id="SPNE170187:G1FZB-1328-MONOMER"/>
<dbReference type="Proteomes" id="UP000000585">
    <property type="component" value="Chromosome"/>
</dbReference>
<dbReference type="GO" id="GO:0005524">
    <property type="term" value="F:ATP binding"/>
    <property type="evidence" value="ECO:0007669"/>
    <property type="project" value="UniProtKB-UniRule"/>
</dbReference>
<dbReference type="GO" id="GO:0046933">
    <property type="term" value="F:proton-transporting ATP synthase activity, rotational mechanism"/>
    <property type="evidence" value="ECO:0007669"/>
    <property type="project" value="UniProtKB-UniRule"/>
</dbReference>
<dbReference type="GO" id="GO:0042777">
    <property type="term" value="P:proton motive force-driven plasma membrane ATP synthesis"/>
    <property type="evidence" value="ECO:0007669"/>
    <property type="project" value="UniProtKB-UniRule"/>
</dbReference>
<dbReference type="CDD" id="cd18112">
    <property type="entry name" value="ATP-synt_V_A-type_beta_C"/>
    <property type="match status" value="1"/>
</dbReference>
<dbReference type="CDD" id="cd18118">
    <property type="entry name" value="ATP-synt_V_A-type_beta_N"/>
    <property type="match status" value="1"/>
</dbReference>
<dbReference type="CDD" id="cd01135">
    <property type="entry name" value="V_A-ATPase_B"/>
    <property type="match status" value="1"/>
</dbReference>
<dbReference type="Gene3D" id="3.40.50.12240">
    <property type="match status" value="1"/>
</dbReference>
<dbReference type="HAMAP" id="MF_00310">
    <property type="entry name" value="ATP_synth_B_arch"/>
    <property type="match status" value="1"/>
</dbReference>
<dbReference type="InterPro" id="IPR055190">
    <property type="entry name" value="ATP-synt_VA_C"/>
</dbReference>
<dbReference type="InterPro" id="IPR020003">
    <property type="entry name" value="ATPase_a/bsu_AS"/>
</dbReference>
<dbReference type="InterPro" id="IPR004100">
    <property type="entry name" value="ATPase_F1/V1/A1_a/bsu_N"/>
</dbReference>
<dbReference type="InterPro" id="IPR000194">
    <property type="entry name" value="ATPase_F1/V1/A1_a/bsu_nucl-bd"/>
</dbReference>
<dbReference type="InterPro" id="IPR027417">
    <property type="entry name" value="P-loop_NTPase"/>
</dbReference>
<dbReference type="InterPro" id="IPR022879">
    <property type="entry name" value="V-ATPase_su_B/beta"/>
</dbReference>
<dbReference type="NCBIfam" id="NF003235">
    <property type="entry name" value="PRK04196.1"/>
    <property type="match status" value="1"/>
</dbReference>
<dbReference type="PANTHER" id="PTHR43389">
    <property type="entry name" value="V-TYPE PROTON ATPASE SUBUNIT B"/>
    <property type="match status" value="1"/>
</dbReference>
<dbReference type="PANTHER" id="PTHR43389:SF4">
    <property type="entry name" value="V-TYPE PROTON ATPASE SUBUNIT B"/>
    <property type="match status" value="1"/>
</dbReference>
<dbReference type="Pfam" id="PF00006">
    <property type="entry name" value="ATP-synt_ab"/>
    <property type="match status" value="1"/>
</dbReference>
<dbReference type="Pfam" id="PF02874">
    <property type="entry name" value="ATP-synt_ab_N"/>
    <property type="match status" value="1"/>
</dbReference>
<dbReference type="Pfam" id="PF22919">
    <property type="entry name" value="ATP-synt_VA_C"/>
    <property type="match status" value="1"/>
</dbReference>
<dbReference type="PIRSF" id="PIRSF039114">
    <property type="entry name" value="V-ATPsynth_beta/V-ATPase_B"/>
    <property type="match status" value="1"/>
</dbReference>
<dbReference type="SUPFAM" id="SSF47917">
    <property type="entry name" value="C-terminal domain of alpha and beta subunits of F1 ATP synthase"/>
    <property type="match status" value="1"/>
</dbReference>
<dbReference type="SUPFAM" id="SSF52540">
    <property type="entry name" value="P-loop containing nucleoside triphosphate hydrolases"/>
    <property type="match status" value="1"/>
</dbReference>
<dbReference type="PROSITE" id="PS00152">
    <property type="entry name" value="ATPASE_ALPHA_BETA"/>
    <property type="match status" value="1"/>
</dbReference>
<proteinExistence type="inferred from homology"/>
<organism>
    <name type="scientific">Streptococcus pneumoniae serotype 4 (strain ATCC BAA-334 / TIGR4)</name>
    <dbReference type="NCBI Taxonomy" id="170187"/>
    <lineage>
        <taxon>Bacteria</taxon>
        <taxon>Bacillati</taxon>
        <taxon>Bacillota</taxon>
        <taxon>Bacilli</taxon>
        <taxon>Lactobacillales</taxon>
        <taxon>Streptococcaceae</taxon>
        <taxon>Streptococcus</taxon>
    </lineage>
</organism>
<gene>
    <name evidence="1" type="primary">atpB</name>
    <name type="ordered locus">SP_1316</name>
</gene>
<feature type="chain" id="PRO_1000059396" description="V-type ATP synthase beta chain">
    <location>
        <begin position="1"/>
        <end position="461"/>
    </location>
</feature>
<evidence type="ECO:0000255" key="1">
    <source>
        <dbReference type="HAMAP-Rule" id="MF_00310"/>
    </source>
</evidence>
<sequence>MSVIKEYRTASEVVGPLMIVEQVNNVSYNELVEIQLHNGEIRRGQVLEIHEDKAMVQLFEGSSGINLEKSKIRFAGHALELAVSEDMVGRIFNGMGKPIDGGPDLIPEKYLDIDGQAINPVSRDYPDEFIQTGISSIDHLNTLVRGQKLPVFSGSGLPHNELAAQIARQATVLNSDENFAVVFAAMGITFEEAEFFMEELRKTGAIDRSVLFMNLANDPAIERIATPRIALTAAEYLAFEKDMHVLVIMTDMTNYCEALREVSAARREVPGRRGYPGYLYTNLSTLYERAGRLVGKKGSVTQIPILTMPEDDITHPIPDLTGYITEGQIILSHELYNQGYRPPINVLPSLSRLKDKGSGEGKTRGDHAPTMNQLFAAYAQGKKVEELAVVLGESALSDVDKLYVRFTKRFEEEYINQGFYKNRNIEDTLNLGWELLSILPRTELKRIKDDLLDKYLPLVEV</sequence>
<keyword id="KW-0066">ATP synthesis</keyword>
<keyword id="KW-0375">Hydrogen ion transport</keyword>
<keyword id="KW-0406">Ion transport</keyword>
<keyword id="KW-1185">Reference proteome</keyword>
<keyword id="KW-0813">Transport</keyword>
<comment type="function">
    <text evidence="1">Produces ATP from ADP in the presence of a proton gradient across the membrane. The V-type beta chain is a regulatory subunit.</text>
</comment>
<comment type="similarity">
    <text evidence="1">Belongs to the ATPase alpha/beta chains family.</text>
</comment>